<name>SL9C1_STRPU</name>
<feature type="signal peptide" evidence="1">
    <location>
        <begin position="1"/>
        <end position="29"/>
    </location>
</feature>
<feature type="chain" id="PRO_5033692359" description="Sperm-specific sodium:proton exchanger">
    <location>
        <begin position="30"/>
        <end position="1325"/>
    </location>
</feature>
<feature type="topological domain" description="Extracellular" evidence="10">
    <location>
        <begin position="30"/>
        <end position="76"/>
    </location>
</feature>
<feature type="transmembrane region" description="Helical; Name=TM1" evidence="5 6">
    <location>
        <begin position="77"/>
        <end position="96"/>
    </location>
</feature>
<feature type="topological domain" description="Cytoplasmic" evidence="10">
    <location>
        <begin position="97"/>
        <end position="101"/>
    </location>
</feature>
<feature type="transmembrane region" description="Helical; Name=TM2" evidence="5 6">
    <location>
        <begin position="102"/>
        <end position="119"/>
    </location>
</feature>
<feature type="topological domain" description="Extracellular" evidence="10">
    <location>
        <begin position="120"/>
        <end position="135"/>
    </location>
</feature>
<feature type="transmembrane region" description="Helical; Name=TM3" evidence="5 6">
    <location>
        <begin position="136"/>
        <end position="152"/>
    </location>
</feature>
<feature type="topological domain" description="Cytoplasmic" evidence="10">
    <location>
        <begin position="153"/>
        <end position="162"/>
    </location>
</feature>
<feature type="transmembrane region" description="Helical; Name=TM4" evidence="5 6">
    <location>
        <begin position="163"/>
        <end position="188"/>
    </location>
</feature>
<feature type="topological domain" description="Extracellular" evidence="10">
    <location>
        <begin position="189"/>
        <end position="194"/>
    </location>
</feature>
<feature type="transmembrane region" description="Helical; Name=TM5" evidence="5 13">
    <location>
        <begin position="195"/>
        <end position="220"/>
    </location>
</feature>
<feature type="topological domain" description="Cytoplasmic" evidence="10">
    <location>
        <begin position="221"/>
        <end position="223"/>
    </location>
</feature>
<feature type="transmembrane region" description="Helical; Name=TM6" evidence="5 6">
    <location>
        <begin position="224"/>
        <end position="249"/>
    </location>
</feature>
<feature type="topological domain" description="Extracellular" evidence="10">
    <location>
        <begin position="250"/>
        <end position="260"/>
    </location>
</feature>
<feature type="transmembrane region" description="Helical; Name=TM7, linker" evidence="5 6">
    <location>
        <begin position="261"/>
        <end position="292"/>
    </location>
</feature>
<feature type="topological domain" description="Cytoplasmic" evidence="10">
    <location>
        <begin position="293"/>
        <end position="296"/>
    </location>
</feature>
<feature type="transmembrane region" description="Helical; Name=TM8" evidence="5 6">
    <location>
        <begin position="297"/>
        <end position="319"/>
    </location>
</feature>
<feature type="topological domain" description="Extracellular" evidence="10">
    <location>
        <begin position="320"/>
        <end position="322"/>
    </location>
</feature>
<feature type="transmembrane region" description="Helical; Name=TM9" evidence="5 6">
    <location>
        <begin position="323"/>
        <end position="336"/>
    </location>
</feature>
<feature type="topological domain" description="Cytoplasmic" evidence="10">
    <location>
        <begin position="337"/>
        <end position="343"/>
    </location>
</feature>
<feature type="transmembrane region" description="Helical; Name=TM10" evidence="5 6">
    <location>
        <begin position="344"/>
        <end position="377"/>
    </location>
</feature>
<feature type="topological domain" description="Extracellular" evidence="10">
    <location>
        <begin position="378"/>
        <end position="382"/>
    </location>
</feature>
<feature type="transmembrane region" description="Helical; Name=TM11" evidence="5 6">
    <location>
        <begin position="383"/>
        <end position="412"/>
    </location>
</feature>
<feature type="topological domain" description="Cytoplasmic" evidence="10">
    <location>
        <begin position="413"/>
        <end position="418"/>
    </location>
</feature>
<feature type="transmembrane region" description="Helical; Name=TM12" evidence="5 6">
    <location>
        <begin position="419"/>
        <end position="446"/>
    </location>
</feature>
<feature type="topological domain" description="Extracellular" evidence="10">
    <location>
        <begin position="447"/>
        <end position="450"/>
    </location>
</feature>
<feature type="transmembrane region" description="Helical; Name=TM13" evidence="5 6">
    <location>
        <begin position="451"/>
        <end position="481"/>
    </location>
</feature>
<feature type="topological domain" description="Cytoplasmic" evidence="10">
    <location>
        <begin position="482"/>
        <end position="677"/>
    </location>
</feature>
<feature type="transmembrane region" description="Helical; Name=S1" evidence="6">
    <location>
        <begin position="678"/>
        <end position="708"/>
    </location>
</feature>
<feature type="topological domain" description="Extracellular" evidence="10">
    <location>
        <begin position="709"/>
        <end position="724"/>
    </location>
</feature>
<feature type="transmembrane region" description="Helical; Name=S2" evidence="6">
    <location>
        <begin position="725"/>
        <end position="752"/>
    </location>
</feature>
<feature type="topological domain" description="Cytoplasmic" evidence="10">
    <location>
        <begin position="753"/>
        <end position="760"/>
    </location>
</feature>
<feature type="transmembrane region" description="Helical; Name=S3" evidence="6">
    <location>
        <begin position="761"/>
        <end position="784"/>
    </location>
</feature>
<feature type="topological domain" description="Extracellular" evidence="10">
    <location>
        <begin position="785"/>
        <end position="795"/>
    </location>
</feature>
<feature type="transmembrane region" description="Helical; Name=S4" evidence="6">
    <location>
        <begin position="796"/>
        <end position="822"/>
    </location>
</feature>
<feature type="topological domain" description="Cytoplasmic" evidence="10">
    <location>
        <begin position="823"/>
        <end position="1325"/>
    </location>
</feature>
<feature type="region of interest" description="Disordered" evidence="3">
    <location>
        <begin position="28"/>
        <end position="68"/>
    </location>
</feature>
<feature type="region of interest" description="Transport core domain" evidence="6">
    <location>
        <begin position="163"/>
        <end position="250"/>
    </location>
</feature>
<feature type="region of interest" description="Transport core domain" evidence="6">
    <location>
        <begin position="383"/>
        <end position="481"/>
    </location>
</feature>
<feature type="region of interest" description="Interacts with the S4 segment of voltage sensor domain" evidence="5">
    <location>
        <begin position="575"/>
        <end position="620"/>
    </location>
</feature>
<feature type="region of interest" description="Interacts with the transport core domain; can lock the transporter in the inward conformation" evidence="6">
    <location>
        <begin position="605"/>
        <end position="620"/>
    </location>
</feature>
<feature type="region of interest" description="S4 segment of voltage sensor domain" evidence="4 5 6">
    <location>
        <begin position="796"/>
        <end position="857"/>
    </location>
</feature>
<feature type="region of interest" description="Interacts with the S4 segment of voltage sensor domain" evidence="5">
    <location>
        <begin position="860"/>
        <end position="919"/>
    </location>
</feature>
<feature type="region of interest" description="cNMP-binding domain" evidence="2 6">
    <location>
        <begin position="968"/>
        <end position="1068"/>
    </location>
</feature>
<feature type="region of interest" description="Disordered" evidence="3">
    <location>
        <begin position="1237"/>
        <end position="1325"/>
    </location>
</feature>
<feature type="short sequence motif" description="Essential for sodium:proton exchange" evidence="1 7 9 12">
    <location>
        <begin position="237"/>
        <end position="238"/>
    </location>
</feature>
<feature type="compositionally biased region" description="Basic and acidic residues" evidence="3">
    <location>
        <begin position="44"/>
        <end position="68"/>
    </location>
</feature>
<feature type="compositionally biased region" description="Low complexity" evidence="3">
    <location>
        <begin position="1266"/>
        <end position="1280"/>
    </location>
</feature>
<feature type="binding site" evidence="5">
    <location>
        <position position="73"/>
    </location>
    <ligand>
        <name>a 1,2-diacylglycero-3-phosphate</name>
        <dbReference type="ChEBI" id="CHEBI:57739"/>
    </ligand>
</feature>
<feature type="binding site" evidence="6 14">
    <location>
        <position position="1043"/>
    </location>
    <ligand>
        <name>3',5'-cyclic AMP</name>
        <dbReference type="ChEBI" id="CHEBI:58165"/>
    </ligand>
</feature>
<feature type="binding site" evidence="6 17">
    <location>
        <position position="1043"/>
    </location>
    <ligand>
        <name>3',5'-cyclic GMP</name>
        <dbReference type="ChEBI" id="CHEBI:57746"/>
    </ligand>
</feature>
<feature type="binding site" evidence="6 17">
    <location>
        <position position="1044"/>
    </location>
    <ligand>
        <name>3',5'-cyclic GMP</name>
        <dbReference type="ChEBI" id="CHEBI:57746"/>
    </ligand>
</feature>
<feature type="binding site" evidence="6 14">
    <location>
        <position position="1045"/>
    </location>
    <ligand>
        <name>3',5'-cyclic AMP</name>
        <dbReference type="ChEBI" id="CHEBI:58165"/>
    </ligand>
</feature>
<feature type="binding site" evidence="6 16">
    <location>
        <position position="1045"/>
    </location>
    <ligand>
        <name>3',5'-cyclic GMP</name>
        <dbReference type="ChEBI" id="CHEBI:57746"/>
    </ligand>
</feature>
<feature type="binding site" evidence="6 15">
    <location>
        <position position="1046"/>
    </location>
    <ligand>
        <name>3',5'-cyclic AMP</name>
        <dbReference type="ChEBI" id="CHEBI:58165"/>
    </ligand>
</feature>
<feature type="binding site" evidence="6 14 15">
    <location>
        <position position="1053"/>
    </location>
    <ligand>
        <name>3',5'-cyclic AMP</name>
        <dbReference type="ChEBI" id="CHEBI:58165"/>
    </ligand>
</feature>
<feature type="binding site" evidence="6 16 17">
    <location>
        <position position="1053"/>
    </location>
    <ligand>
        <name>3',5'-cyclic GMP</name>
        <dbReference type="ChEBI" id="CHEBI:57746"/>
    </ligand>
</feature>
<feature type="binding site" evidence="6 14 15">
    <location>
        <position position="1054"/>
    </location>
    <ligand>
        <name>3',5'-cyclic AMP</name>
        <dbReference type="ChEBI" id="CHEBI:58165"/>
    </ligand>
</feature>
<feature type="binding site" evidence="6 16 17">
    <location>
        <position position="1054"/>
    </location>
    <ligand>
        <name>3',5'-cyclic GMP</name>
        <dbReference type="ChEBI" id="CHEBI:57746"/>
    </ligand>
</feature>
<feature type="site" description="Contributes one equivalent gating charge" evidence="4">
    <location>
        <position position="803"/>
    </location>
</feature>
<feature type="mutagenesis site" description="Abolishes sodium:proton antiporter activity." evidence="5">
    <original>D</original>
    <variation>A</variation>
    <location>
        <position position="238"/>
    </location>
</feature>
<feature type="mutagenesis site" description="Does not affect the production of voltage-gated currents. Abolishes sodium:proton antiporter activity." evidence="4">
    <original>R</original>
    <variation>A</variation>
    <location>
        <position position="399"/>
    </location>
</feature>
<feature type="mutagenesis site" description="Alters the half-maximal activation voltage of gating current. Shifts the activation of the transporter to more negative voltages." evidence="4">
    <original>R</original>
    <variation>Q</variation>
    <location>
        <position position="803"/>
    </location>
</feature>
<feature type="mutagenesis site" description="Abolishes cAMP-induced shift of half-maximal activation voltage of gating current." evidence="4">
    <original>R</original>
    <variation>Q</variation>
    <location>
        <position position="1053"/>
    </location>
</feature>
<feature type="helix" evidence="19">
    <location>
        <begin position="77"/>
        <end position="94"/>
    </location>
</feature>
<feature type="strand" evidence="19">
    <location>
        <begin position="96"/>
        <end position="100"/>
    </location>
</feature>
<feature type="helix" evidence="19">
    <location>
        <begin position="102"/>
        <end position="119"/>
    </location>
</feature>
<feature type="helix" evidence="19">
    <location>
        <begin position="121"/>
        <end position="125"/>
    </location>
</feature>
<feature type="strand" evidence="19">
    <location>
        <begin position="128"/>
        <end position="132"/>
    </location>
</feature>
<feature type="helix" evidence="19">
    <location>
        <begin position="135"/>
        <end position="153"/>
    </location>
</feature>
<feature type="helix" evidence="19">
    <location>
        <begin position="156"/>
        <end position="161"/>
    </location>
</feature>
<feature type="helix" evidence="19">
    <location>
        <begin position="163"/>
        <end position="188"/>
    </location>
</feature>
<feature type="strand" evidence="19">
    <location>
        <begin position="189"/>
        <end position="191"/>
    </location>
</feature>
<feature type="helix" evidence="19">
    <location>
        <begin position="195"/>
        <end position="205"/>
    </location>
</feature>
<feature type="helix" evidence="19">
    <location>
        <begin position="211"/>
        <end position="219"/>
    </location>
</feature>
<feature type="strand" evidence="21">
    <location>
        <begin position="220"/>
        <end position="222"/>
    </location>
</feature>
<feature type="helix" evidence="19">
    <location>
        <begin position="224"/>
        <end position="253"/>
    </location>
</feature>
<feature type="helix" evidence="19">
    <location>
        <begin position="261"/>
        <end position="290"/>
    </location>
</feature>
<feature type="helix" evidence="19">
    <location>
        <begin position="297"/>
        <end position="316"/>
    </location>
</feature>
<feature type="strand" evidence="19">
    <location>
        <begin position="317"/>
        <end position="319"/>
    </location>
</feature>
<feature type="helix" evidence="19">
    <location>
        <begin position="323"/>
        <end position="336"/>
    </location>
</feature>
<feature type="turn" evidence="19">
    <location>
        <begin position="337"/>
        <end position="339"/>
    </location>
</feature>
<feature type="helix" evidence="19">
    <location>
        <begin position="343"/>
        <end position="375"/>
    </location>
</feature>
<feature type="helix" evidence="19">
    <location>
        <begin position="376"/>
        <end position="378"/>
    </location>
</feature>
<feature type="helix" evidence="19">
    <location>
        <begin position="382"/>
        <end position="412"/>
    </location>
</feature>
<feature type="strand" evidence="19">
    <location>
        <begin position="413"/>
        <end position="415"/>
    </location>
</feature>
<feature type="helix" evidence="19">
    <location>
        <begin position="419"/>
        <end position="427"/>
    </location>
</feature>
<feature type="helix" evidence="19">
    <location>
        <begin position="433"/>
        <end position="445"/>
    </location>
</feature>
<feature type="turn" evidence="21">
    <location>
        <begin position="446"/>
        <end position="448"/>
    </location>
</feature>
<feature type="helix" evidence="19">
    <location>
        <begin position="449"/>
        <end position="480"/>
    </location>
</feature>
<feature type="helix" evidence="19">
    <location>
        <begin position="488"/>
        <end position="514"/>
    </location>
</feature>
<feature type="strand" evidence="19">
    <location>
        <begin position="516"/>
        <end position="521"/>
    </location>
</feature>
<feature type="helix" evidence="19">
    <location>
        <begin position="525"/>
        <end position="528"/>
    </location>
</feature>
<feature type="helix" evidence="19">
    <location>
        <begin position="574"/>
        <end position="599"/>
    </location>
</feature>
<feature type="turn" evidence="18">
    <location>
        <begin position="601"/>
        <end position="605"/>
    </location>
</feature>
<feature type="helix" evidence="19">
    <location>
        <begin position="606"/>
        <end position="620"/>
    </location>
</feature>
<feature type="strand" evidence="19">
    <location>
        <begin position="621"/>
        <end position="623"/>
    </location>
</feature>
<feature type="strand" evidence="18">
    <location>
        <begin position="629"/>
        <end position="631"/>
    </location>
</feature>
<feature type="turn" evidence="19">
    <location>
        <begin position="632"/>
        <end position="634"/>
    </location>
</feature>
<feature type="helix" evidence="19">
    <location>
        <begin position="635"/>
        <end position="638"/>
    </location>
</feature>
<feature type="helix" evidence="19">
    <location>
        <begin position="642"/>
        <end position="653"/>
    </location>
</feature>
<feature type="helix" evidence="20">
    <location>
        <begin position="654"/>
        <end position="656"/>
    </location>
</feature>
<feature type="strand" evidence="19">
    <location>
        <begin position="665"/>
        <end position="667"/>
    </location>
</feature>
<feature type="helix" evidence="19">
    <location>
        <begin position="669"/>
        <end position="676"/>
    </location>
</feature>
<feature type="helix" evidence="19">
    <location>
        <begin position="678"/>
        <end position="703"/>
    </location>
</feature>
<feature type="helix" evidence="19">
    <location>
        <begin position="724"/>
        <end position="749"/>
    </location>
</feature>
<feature type="turn" evidence="19">
    <location>
        <begin position="750"/>
        <end position="756"/>
    </location>
</feature>
<feature type="helix" evidence="19">
    <location>
        <begin position="757"/>
        <end position="760"/>
    </location>
</feature>
<feature type="helix" evidence="19">
    <location>
        <begin position="762"/>
        <end position="782"/>
    </location>
</feature>
<feature type="turn" evidence="19">
    <location>
        <begin position="788"/>
        <end position="791"/>
    </location>
</feature>
<feature type="strand" evidence="19">
    <location>
        <begin position="792"/>
        <end position="794"/>
    </location>
</feature>
<feature type="turn" evidence="19">
    <location>
        <begin position="795"/>
        <end position="797"/>
    </location>
</feature>
<feature type="helix" evidence="19">
    <location>
        <begin position="800"/>
        <end position="802"/>
    </location>
</feature>
<feature type="helix" evidence="19">
    <location>
        <begin position="804"/>
        <end position="807"/>
    </location>
</feature>
<feature type="helix" evidence="19">
    <location>
        <begin position="808"/>
        <end position="811"/>
    </location>
</feature>
<feature type="helix" evidence="19">
    <location>
        <begin position="814"/>
        <end position="856"/>
    </location>
</feature>
<feature type="turn" evidence="19">
    <location>
        <begin position="861"/>
        <end position="863"/>
    </location>
</feature>
<feature type="helix" evidence="19">
    <location>
        <begin position="864"/>
        <end position="888"/>
    </location>
</feature>
<feature type="helix" evidence="19">
    <location>
        <begin position="890"/>
        <end position="918"/>
    </location>
</feature>
<feature type="helix" evidence="19">
    <location>
        <begin position="924"/>
        <end position="942"/>
    </location>
</feature>
<feature type="helix" evidence="19">
    <location>
        <begin position="953"/>
        <end position="958"/>
    </location>
</feature>
<feature type="turn" evidence="19">
    <location>
        <begin position="961"/>
        <end position="963"/>
    </location>
</feature>
<feature type="helix" evidence="19">
    <location>
        <begin position="967"/>
        <end position="975"/>
    </location>
</feature>
<feature type="strand" evidence="19">
    <location>
        <begin position="979"/>
        <end position="982"/>
    </location>
</feature>
<feature type="strand" evidence="19">
    <location>
        <begin position="987"/>
        <end position="989"/>
    </location>
</feature>
<feature type="strand" evidence="19">
    <location>
        <begin position="1000"/>
        <end position="1011"/>
    </location>
</feature>
<feature type="strand" evidence="19">
    <location>
        <begin position="1031"/>
        <end position="1039"/>
    </location>
</feature>
<feature type="strand" evidence="23">
    <location>
        <begin position="1041"/>
        <end position="1043"/>
    </location>
</feature>
<feature type="helix" evidence="19">
    <location>
        <begin position="1044"/>
        <end position="1049"/>
    </location>
</feature>
<feature type="strand" evidence="19">
    <location>
        <begin position="1054"/>
        <end position="1061"/>
    </location>
</feature>
<feature type="strand" evidence="19">
    <location>
        <begin position="1063"/>
        <end position="1066"/>
    </location>
</feature>
<feature type="helix" evidence="19">
    <location>
        <begin position="1070"/>
        <end position="1079"/>
    </location>
</feature>
<feature type="strand" evidence="22">
    <location>
        <begin position="1082"/>
        <end position="1084"/>
    </location>
</feature>
<feature type="helix" evidence="19">
    <location>
        <begin position="1086"/>
        <end position="1106"/>
    </location>
</feature>
<feature type="strand" evidence="19">
    <location>
        <begin position="1108"/>
        <end position="1110"/>
    </location>
</feature>
<feature type="turn" evidence="19">
    <location>
        <begin position="1113"/>
        <end position="1115"/>
    </location>
</feature>
<feature type="helix" evidence="19">
    <location>
        <begin position="1116"/>
        <end position="1122"/>
    </location>
</feature>
<feature type="strand" evidence="20">
    <location>
        <begin position="1125"/>
        <end position="1127"/>
    </location>
</feature>
<feature type="helix" evidence="22">
    <location>
        <begin position="1129"/>
        <end position="1131"/>
    </location>
</feature>
<feature type="strand" evidence="20">
    <location>
        <begin position="1133"/>
        <end position="1136"/>
    </location>
</feature>
<feature type="turn" evidence="19">
    <location>
        <begin position="1140"/>
        <end position="1142"/>
    </location>
</feature>
<feature type="strand" evidence="19">
    <location>
        <begin position="1145"/>
        <end position="1150"/>
    </location>
</feature>
<feature type="strand" evidence="19">
    <location>
        <begin position="1153"/>
        <end position="1157"/>
    </location>
</feature>
<feature type="strand" evidence="19">
    <location>
        <begin position="1163"/>
        <end position="1166"/>
    </location>
</feature>
<feature type="turn" evidence="19">
    <location>
        <begin position="1168"/>
        <end position="1170"/>
    </location>
</feature>
<feature type="strand" evidence="19">
    <location>
        <begin position="1173"/>
        <end position="1175"/>
    </location>
</feature>
<feature type="strand" evidence="19">
    <location>
        <begin position="1180"/>
        <end position="1182"/>
    </location>
</feature>
<feature type="strand" evidence="19">
    <location>
        <begin position="1185"/>
        <end position="1188"/>
    </location>
</feature>
<protein>
    <recommendedName>
        <fullName>Sperm-specific sodium:proton exchanger</fullName>
    </recommendedName>
    <alternativeName>
        <fullName>Solute carrier family 9 member C1</fullName>
    </alternativeName>
    <alternativeName>
        <fullName evidence="8">Voltage-gated Na(+)/H(+) exchanger</fullName>
    </alternativeName>
</protein>
<accession>A3RL54</accession>
<comment type="function">
    <text evidence="4 5 6">Electroneutral sodium:proton antiporter that regulates intracellular pH of sperm along with capacitation and fertility. Activated in response to egg-derived chemoattractants, couples membrane voltage to sodium:proton exchange and transduces membrane hyperpolarization to cytoplasmic alkalization to cAMP signaling and ultimately to sperm motility.</text>
</comment>
<comment type="catalytic activity">
    <reaction evidence="4 5">
        <text>Na(+)(in) + H(+)(out) = Na(+)(out) + H(+)(in)</text>
        <dbReference type="Rhea" id="RHEA:29419"/>
        <dbReference type="ChEBI" id="CHEBI:15378"/>
        <dbReference type="ChEBI" id="CHEBI:29101"/>
    </reaction>
    <physiologicalReaction direction="left-to-right" evidence="11">
        <dbReference type="Rhea" id="RHEA:29420"/>
    </physiologicalReaction>
    <physiologicalReaction direction="right-to-left" evidence="11">
        <dbReference type="Rhea" id="RHEA:29421"/>
    </physiologicalReaction>
</comment>
<comment type="activity regulation">
    <text evidence="4">Gated by voltage and stimulated by cyclic nucleotides which shift the activation voltage closer to resting membrane potential. Not inhibited by common sodium:proton exchanger inhibitors such as amiloride.</text>
</comment>
<comment type="biophysicochemical properties">
    <phDependence>
        <text evidence="5">Optimum pH is 6.5.</text>
    </phDependence>
</comment>
<comment type="subunit">
    <text evidence="5 6">Homodimer; the dimerization is stabilized in the presence of phosphatidic acids.</text>
</comment>
<comment type="subcellular location">
    <subcellularLocation>
        <location evidence="4">Cell projection</location>
        <location evidence="4">Cilium</location>
        <location evidence="4">Flagellum membrane</location>
        <topology>Multi-pass membrane protein</topology>
    </subcellularLocation>
    <text evidence="4">Observed primarily in sperm flagellum and at the tip of the sperm head.</text>
</comment>
<comment type="domain">
    <text evidence="6">The dimer domain comprises TM1-TM3 and TM8-TM10 regions. The dimerization interface is formed predominantly by tight interactions between TM1 on one protomer and TM8 on the other. It contains an hydrophobic cavity that accomodates phosphatidic acids likely playing an allosteric role.</text>
</comment>
<comment type="domain">
    <text evidence="5 6">The transport core domain (TM4-TM6 and TM11-TM13) displays a typical sodium:proton exchanger (NHE) fold with a six transmembrane helix inverted repeat topology. It contains an Asn-Asp (Asn-237-Asp-238) sodium-coordinating motif characteristic of electroneutral NHEs.</text>
</comment>
<comment type="domain">
    <text evidence="4 5 6">The voltage sensor domain (VSD) produces gating currents in response to hyperpolarization. It consists of four helices S1-S4 arranged in a bundle within the membrane. The extended S4 helix is essential for voltage sensing. The transmembrane part of S4 (residues 796-822) contains seven gating-charge residues in a canonical pattern (R/K-XX)n and interacts via salt bridges and hydrogen bonds with other charged residues in S1-S3 segments to form the charge transfer center. The extramembrane part of S4 (residues 823-857) is embedded within a network of intracellular coupling helices and may mediate their movement upon hyperpolarization. Unlike voltage-gated channels, there is no linker to directly connect the voltage sensor to the transporter domain.</text>
</comment>
<comment type="domain">
    <text evidence="6">The cNMP-binding domain responds to cyclic nucleotides shifting the activation voltage near resting membrane potential. Has higher affinity for cAMP than cGMP.</text>
</comment>
<comment type="miscellaneous">
    <text evidence="10">The VSD and CNBD domains are not functional in mammalian SLC9 orthologs. In addition, the conserved Asn-Asp/Asp-Asp motif that coordinates sodium ions in NHEs is lacking in mammalian SLC9C1 and SLC9C2, suggesting alternative transport mechanisms and/or substrates.</text>
</comment>
<comment type="similarity">
    <text evidence="10">Belongs to the monovalent cation:proton antiporter 1 (CPA1) transporter (TC 2.A.36) family.</text>
</comment>
<proteinExistence type="evidence at protein level"/>
<dbReference type="EMBL" id="EF424083">
    <property type="protein sequence ID" value="ABO09861.1"/>
    <property type="molecule type" value="mRNA"/>
</dbReference>
<dbReference type="RefSeq" id="NP_001091927.1">
    <property type="nucleotide sequence ID" value="NM_001098457.1"/>
</dbReference>
<dbReference type="PDB" id="8OTQ">
    <property type="method" value="EM"/>
    <property type="resolution" value="3.22 A"/>
    <property type="chains" value="A=1-1325"/>
</dbReference>
<dbReference type="PDB" id="8OTW">
    <property type="method" value="EM"/>
    <property type="resolution" value="3.68 A"/>
    <property type="chains" value="A/B=1-1325"/>
</dbReference>
<dbReference type="PDB" id="8OTX">
    <property type="method" value="EM"/>
    <property type="resolution" value="3.08 A"/>
    <property type="chains" value="A=1-1325"/>
</dbReference>
<dbReference type="PDB" id="8PCZ">
    <property type="method" value="EM"/>
    <property type="resolution" value="3.21 A"/>
    <property type="chains" value="A=2-1325"/>
</dbReference>
<dbReference type="PDB" id="8PD2">
    <property type="method" value="EM"/>
    <property type="resolution" value="3.25 A"/>
    <property type="chains" value="A=2-1325"/>
</dbReference>
<dbReference type="PDB" id="8PD3">
    <property type="method" value="EM"/>
    <property type="resolution" value="3.30 A"/>
    <property type="chains" value="A=2-1325"/>
</dbReference>
<dbReference type="PDB" id="8PD5">
    <property type="method" value="EM"/>
    <property type="resolution" value="3.40 A"/>
    <property type="chains" value="A=2-1325"/>
</dbReference>
<dbReference type="PDB" id="8PD7">
    <property type="method" value="EM"/>
    <property type="resolution" value="3.40 A"/>
    <property type="chains" value="A=2-1325"/>
</dbReference>
<dbReference type="PDB" id="8PD8">
    <property type="method" value="EM"/>
    <property type="resolution" value="3.30 A"/>
    <property type="chains" value="A=2-1325"/>
</dbReference>
<dbReference type="PDB" id="8PD9">
    <property type="method" value="EM"/>
    <property type="resolution" value="3.60 A"/>
    <property type="chains" value="A=2-1325"/>
</dbReference>
<dbReference type="PDB" id="8PDU">
    <property type="method" value="EM"/>
    <property type="resolution" value="3.22 A"/>
    <property type="chains" value="A=2-1325"/>
</dbReference>
<dbReference type="PDB" id="8PDV">
    <property type="method" value="EM"/>
    <property type="resolution" value="3.26 A"/>
    <property type="chains" value="A=2-1325"/>
</dbReference>
<dbReference type="PDB" id="8XPQ">
    <property type="method" value="EM"/>
    <property type="resolution" value="3.10 A"/>
    <property type="chains" value="A/B=30-1325"/>
</dbReference>
<dbReference type="PDB" id="8XQ4">
    <property type="method" value="EM"/>
    <property type="resolution" value="3.21 A"/>
    <property type="chains" value="A=30-1325"/>
</dbReference>
<dbReference type="PDB" id="8XQ5">
    <property type="method" value="EM"/>
    <property type="resolution" value="3.15 A"/>
    <property type="chains" value="A/B=30-1325"/>
</dbReference>
<dbReference type="PDB" id="8XQ6">
    <property type="method" value="EM"/>
    <property type="resolution" value="3.36 A"/>
    <property type="chains" value="A=30-1325"/>
</dbReference>
<dbReference type="PDB" id="8XQ7">
    <property type="method" value="EM"/>
    <property type="resolution" value="3.15 A"/>
    <property type="chains" value="A/B=30-1223"/>
</dbReference>
<dbReference type="PDB" id="8XQ8">
    <property type="method" value="EM"/>
    <property type="resolution" value="3.35 A"/>
    <property type="chains" value="A=30-1194"/>
</dbReference>
<dbReference type="PDB" id="8XQ9">
    <property type="method" value="EM"/>
    <property type="resolution" value="3.77 A"/>
    <property type="chains" value="A/B=30-1325"/>
</dbReference>
<dbReference type="PDB" id="8XQA">
    <property type="method" value="EM"/>
    <property type="resolution" value="3.54 A"/>
    <property type="chains" value="A/B=30-1325"/>
</dbReference>
<dbReference type="PDBsum" id="8OTQ"/>
<dbReference type="PDBsum" id="8OTW"/>
<dbReference type="PDBsum" id="8OTX"/>
<dbReference type="PDBsum" id="8PCZ"/>
<dbReference type="PDBsum" id="8PD2"/>
<dbReference type="PDBsum" id="8PD3"/>
<dbReference type="PDBsum" id="8PD5"/>
<dbReference type="PDBsum" id="8PD7"/>
<dbReference type="PDBsum" id="8PD8"/>
<dbReference type="PDBsum" id="8PD9"/>
<dbReference type="PDBsum" id="8PDU"/>
<dbReference type="PDBsum" id="8PDV"/>
<dbReference type="PDBsum" id="8XPQ"/>
<dbReference type="PDBsum" id="8XQ4"/>
<dbReference type="PDBsum" id="8XQ5"/>
<dbReference type="PDBsum" id="8XQ6"/>
<dbReference type="PDBsum" id="8XQ7"/>
<dbReference type="PDBsum" id="8XQ8"/>
<dbReference type="PDBsum" id="8XQ9"/>
<dbReference type="PDBsum" id="8XQA"/>
<dbReference type="EMDB" id="EMD-17182"/>
<dbReference type="EMDB" id="EMD-17185"/>
<dbReference type="EMDB" id="EMD-17186"/>
<dbReference type="EMDB" id="EMD-17596"/>
<dbReference type="EMDB" id="EMD-17598"/>
<dbReference type="EMDB" id="EMD-17599"/>
<dbReference type="EMDB" id="EMD-17601"/>
<dbReference type="EMDB" id="EMD-17602"/>
<dbReference type="EMDB" id="EMD-17603"/>
<dbReference type="EMDB" id="EMD-17604"/>
<dbReference type="EMDB" id="EMD-17605"/>
<dbReference type="EMDB" id="EMD-17607"/>
<dbReference type="EMDB" id="EMD-17621"/>
<dbReference type="EMDB" id="EMD-17622"/>
<dbReference type="EMDB" id="EMD-17625"/>
<dbReference type="EMDB" id="EMD-38559"/>
<dbReference type="EMDB" id="EMD-38565"/>
<dbReference type="EMDB" id="EMD-38566"/>
<dbReference type="EMDB" id="EMD-38567"/>
<dbReference type="EMDB" id="EMD-38568"/>
<dbReference type="EMDB" id="EMD-38569"/>
<dbReference type="EMDB" id="EMD-38570"/>
<dbReference type="EMDB" id="EMD-38571"/>
<dbReference type="SMR" id="A3RL54"/>
<dbReference type="EnsemblMetazoa" id="NM_001098457">
    <property type="protein sequence ID" value="NP_001091927"/>
    <property type="gene ID" value="GeneID_754777"/>
</dbReference>
<dbReference type="GeneID" id="754777"/>
<dbReference type="KEGG" id="spu:754777"/>
<dbReference type="CTD" id="285335"/>
<dbReference type="HOGENOM" id="CLU_003400_2_1_1"/>
<dbReference type="InParanoid" id="A3RL54"/>
<dbReference type="OMA" id="GYWCARI"/>
<dbReference type="OrthoDB" id="441412at2759"/>
<dbReference type="Proteomes" id="UP000007110">
    <property type="component" value="Unassembled WGS sequence"/>
</dbReference>
<dbReference type="GO" id="GO:0005886">
    <property type="term" value="C:plasma membrane"/>
    <property type="evidence" value="ECO:0000318"/>
    <property type="project" value="GO_Central"/>
</dbReference>
<dbReference type="GO" id="GO:0036126">
    <property type="term" value="C:sperm flagellum"/>
    <property type="evidence" value="ECO:0000314"/>
    <property type="project" value="UniProtKB"/>
</dbReference>
<dbReference type="GO" id="GO:0061827">
    <property type="term" value="C:sperm head"/>
    <property type="evidence" value="ECO:0000314"/>
    <property type="project" value="UniProtKB"/>
</dbReference>
<dbReference type="GO" id="GO:0030552">
    <property type="term" value="F:cAMP binding"/>
    <property type="evidence" value="ECO:0000314"/>
    <property type="project" value="UniProtKB"/>
</dbReference>
<dbReference type="GO" id="GO:0030553">
    <property type="term" value="F:cGMP binding"/>
    <property type="evidence" value="ECO:0000314"/>
    <property type="project" value="UniProtKB"/>
</dbReference>
<dbReference type="GO" id="GO:0015386">
    <property type="term" value="F:potassium:proton antiporter activity"/>
    <property type="evidence" value="ECO:0000318"/>
    <property type="project" value="GO_Central"/>
</dbReference>
<dbReference type="GO" id="GO:0042803">
    <property type="term" value="F:protein homodimerization activity"/>
    <property type="evidence" value="ECO:0000314"/>
    <property type="project" value="UniProtKB"/>
</dbReference>
<dbReference type="GO" id="GO:0015385">
    <property type="term" value="F:sodium:proton antiporter activity"/>
    <property type="evidence" value="ECO:0000314"/>
    <property type="project" value="UniProtKB"/>
</dbReference>
<dbReference type="GO" id="GO:0071805">
    <property type="term" value="P:potassium ion transmembrane transport"/>
    <property type="evidence" value="ECO:0000318"/>
    <property type="project" value="GO_Central"/>
</dbReference>
<dbReference type="GO" id="GO:0051453">
    <property type="term" value="P:regulation of intracellular pH"/>
    <property type="evidence" value="ECO:0000318"/>
    <property type="project" value="GO_Central"/>
</dbReference>
<dbReference type="GO" id="GO:0007338">
    <property type="term" value="P:single fertilization"/>
    <property type="evidence" value="ECO:0007669"/>
    <property type="project" value="UniProtKB-KW"/>
</dbReference>
<dbReference type="GO" id="GO:0098719">
    <property type="term" value="P:sodium ion import across plasma membrane"/>
    <property type="evidence" value="ECO:0000318"/>
    <property type="project" value="GO_Central"/>
</dbReference>
<dbReference type="CDD" id="cd00038">
    <property type="entry name" value="CAP_ED"/>
    <property type="match status" value="1"/>
</dbReference>
<dbReference type="FunFam" id="1.20.120.350:FF:000050">
    <property type="entry name" value="Solute carrier family 9 member C1"/>
    <property type="match status" value="1"/>
</dbReference>
<dbReference type="FunFam" id="2.60.120.10:FF:000067">
    <property type="entry name" value="Solute carrier family 9 member C1"/>
    <property type="match status" value="1"/>
</dbReference>
<dbReference type="Gene3D" id="6.10.140.1330">
    <property type="match status" value="1"/>
</dbReference>
<dbReference type="Gene3D" id="2.60.120.10">
    <property type="entry name" value="Jelly Rolls"/>
    <property type="match status" value="1"/>
</dbReference>
<dbReference type="Gene3D" id="1.20.120.350">
    <property type="entry name" value="Voltage-gated potassium channels. Chain C"/>
    <property type="match status" value="1"/>
</dbReference>
<dbReference type="InterPro" id="IPR018422">
    <property type="entry name" value="Cation/H_exchanger_CPA1"/>
</dbReference>
<dbReference type="InterPro" id="IPR006153">
    <property type="entry name" value="Cation/H_exchanger_TM"/>
</dbReference>
<dbReference type="InterPro" id="IPR000595">
    <property type="entry name" value="cNMP-bd_dom"/>
</dbReference>
<dbReference type="InterPro" id="IPR018490">
    <property type="entry name" value="cNMP-bd_dom_sf"/>
</dbReference>
<dbReference type="InterPro" id="IPR014710">
    <property type="entry name" value="RmlC-like_jellyroll"/>
</dbReference>
<dbReference type="InterPro" id="IPR027359">
    <property type="entry name" value="Volt_channel_dom_sf"/>
</dbReference>
<dbReference type="PANTHER" id="PTHR10110">
    <property type="entry name" value="SODIUM/HYDROGEN EXCHANGER"/>
    <property type="match status" value="1"/>
</dbReference>
<dbReference type="PANTHER" id="PTHR10110:SF86">
    <property type="entry name" value="SODIUM_HYDROGEN EXCHANGER 7"/>
    <property type="match status" value="1"/>
</dbReference>
<dbReference type="Pfam" id="PF00027">
    <property type="entry name" value="cNMP_binding"/>
    <property type="match status" value="1"/>
</dbReference>
<dbReference type="Pfam" id="PF00999">
    <property type="entry name" value="Na_H_Exchanger"/>
    <property type="match status" value="1"/>
</dbReference>
<dbReference type="SMART" id="SM00100">
    <property type="entry name" value="cNMP"/>
    <property type="match status" value="1"/>
</dbReference>
<dbReference type="SUPFAM" id="SSF51206">
    <property type="entry name" value="cAMP-binding domain-like"/>
    <property type="match status" value="1"/>
</dbReference>
<dbReference type="SUPFAM" id="SSF81324">
    <property type="entry name" value="Voltage-gated potassium channels"/>
    <property type="match status" value="1"/>
</dbReference>
<dbReference type="PROSITE" id="PS50042">
    <property type="entry name" value="CNMP_BINDING_3"/>
    <property type="match status" value="1"/>
</dbReference>
<keyword id="KW-0002">3D-structure</keyword>
<keyword id="KW-0050">Antiport</keyword>
<keyword id="KW-1003">Cell membrane</keyword>
<keyword id="KW-0966">Cell projection</keyword>
<keyword id="KW-0969">Cilium</keyword>
<keyword id="KW-0278">Fertilization</keyword>
<keyword id="KW-0282">Flagellum</keyword>
<keyword id="KW-0406">Ion transport</keyword>
<keyword id="KW-0472">Membrane</keyword>
<keyword id="KW-1185">Reference proteome</keyword>
<keyword id="KW-0732">Signal</keyword>
<keyword id="KW-0915">Sodium</keyword>
<keyword id="KW-0739">Sodium transport</keyword>
<keyword id="KW-0812">Transmembrane</keyword>
<keyword id="KW-1133">Transmembrane helix</keyword>
<keyword id="KW-0813">Transport</keyword>
<organism>
    <name type="scientific">Strongylocentrotus purpuratus</name>
    <name type="common">Purple sea urchin</name>
    <dbReference type="NCBI Taxonomy" id="7668"/>
    <lineage>
        <taxon>Eukaryota</taxon>
        <taxon>Metazoa</taxon>
        <taxon>Echinodermata</taxon>
        <taxon>Eleutherozoa</taxon>
        <taxon>Echinozoa</taxon>
        <taxon>Echinoidea</taxon>
        <taxon>Euechinoidea</taxon>
        <taxon>Echinacea</taxon>
        <taxon>Camarodonta</taxon>
        <taxon>Echinidea</taxon>
        <taxon>Strongylocentrotidae</taxon>
        <taxon>Strongylocentrotus</taxon>
    </lineage>
</organism>
<sequence length="1325" mass="146572">MKKRVVKLRELVPAVAALAVAVLIQSATGSSGGSGHTPTTQATHADDHDLTTHNGTEEHDDGHDDGHDDLHAHAPKVIVFISGSCLFGAISRSLFKKLPIPYTVVLLILGAILGVVASNVPLVEEHTRDVAHMDPHVLLQIFLPVLIFESAFAMDVHTFMRSFSQVCILALFGLVVASVLTAVLAMNLFNYNWNFSEAMMFGAIMSATDPVAVVALLKDLGASKQLGTIIEGESLLNDGCAIVIFNVFMKMVFFPQLTSTVGQNVLYFLQVAVAGPLWGYAVAKVTVFFLSHIFNDALVEITITLAATYLTYYIGDIWLEVSGVLAVVVLGLIVNAEKTSISPEVEVFLHRFWEMLAYLANTLIFMMVGVVVTQKALVAVDKMDWFYLIILYLAITIIRGMVISLFSPILSRIGYGLTWRNAVIMTWGGLRGAVGLALALVVENLAGNDVIGSKFLFHTAGIVVLTLVINATTIQTLLRILGMSDISIPKRLAMAGAVRRIHEGQNRTLNMLKSDRFLADADWDIATAACEISDPYSALSDDENAPADELTLGERKSVCPGCKAMVPNEPSPREFADMMEEARLRMLKAEKISYWKQFEHGMLAREALRLLVQHAEVAADEKDQFILVDDLKKSWQIKGIYPWLKRKLEDLISEKKIAAIPMPKYKLGKLMYKICHHMAFEVTINIAIVLNIVPIIMEFVVQDKMASVSTMAAPGSTVSSEPSSLQKIEDALRISNYVFFVIYAIEAIVKILGLGRHYIVSHWNKFDAFILVVALVDIIIAETLLKGSITINLSSIKVVKLFRLLRGLRMLRLTKALIPKLILVVNGKINNQLSLGYDVGKGYIIGEEEVGKIIDRMVDNKKILRELKHISETGRLQVVKELGLLQREHPGIAVSVKTRQAIRTILNHSRETIHELQGAGLLDEMEAHKLELTVEIKMKRLMNAPSSIPPPPPENLLKNVSWLAGDMKLIDFIKARASLLHFDYGEVIVREGDESDGLFLIVSGLVKLYGKSAFLDHDNPPVTAGSEENEVFEDYLTVGNVIGEMGVLTKKPRNATVTCETTVQVYFITAEDMNIAIDTFTLYPSLEYRLWRVVAIRIATPLIMEQMAFQGWTQEKVKLHLERGYLVDLAESHFQFNIDATLEDVILINGTAYNAHTREEIRSPCLISRTVHKLTFQYTATEEPRLFVVRNAEYNGPILDGRLDVDSKRSLISITEISSNMCLKHAAELRQKNSKVMLSRKSSGAAAKEEEDCIPNTSDVEQAAGVSPSVPTKTTPKPKSFLPSLGLSMSKERVNGEAVEESPVKTKQGEETPETEEGAAPRVNV</sequence>
<reference key="1">
    <citation type="submission" date="2007-02" db="EMBL/GenBank/DDBJ databases">
        <title>Strongylocentrotus purpuratus sperm-specific sodium proton exchanger.</title>
        <authorList>
            <person name="Kinukawa M."/>
            <person name="Nomura M."/>
            <person name="Vacquier V.D."/>
        </authorList>
    </citation>
    <scope>NUCLEOTIDE SEQUENCE [MRNA]</scope>
</reference>
<reference key="2">
    <citation type="journal article" date="2018" name="Nat. Commun.">
        <title>The solute carrier SLC9C1 is a Na+/H+-exchanger gated by an S4-type voltage-sensor and cyclic-nucleotide binding.</title>
        <authorList>
            <person name="Windler F."/>
            <person name="Boenigk W."/>
            <person name="Koerschen H.G."/>
            <person name="Grahn E."/>
            <person name="Struenker T."/>
            <person name="Seifert R."/>
            <person name="Kaupp U.B."/>
        </authorList>
    </citation>
    <scope>FUNCTION</scope>
    <scope>TRANSPORTER ACTIVITY</scope>
    <scope>ACTIVITY REGULATION</scope>
    <scope>SUBCELLULAR LOCATION</scope>
    <scope>DOMAIN</scope>
    <scope>SITE</scope>
    <scope>MUTAGENESIS OF ARG-399; ARG-803 AND ARG-1053</scope>
</reference>
<reference key="3">
    <citation type="journal article" date="2023" name="Nature">
        <title>Structure and electromechanical coupling of a voltage-gated Na+/H+ exchanger.</title>
        <authorList>
            <person name="Yeo H."/>
            <person name="Mehta V."/>
            <person name="Gulati A."/>
            <person name="Drew D."/>
        </authorList>
    </citation>
    <scope>STRUCTURE BY ELECTRON MICROSCOPY (3.08 ANGSTROMS) IN COMPLEX WITH A 1,2-DIACYLGLYCERO-3-PHOSPHATE</scope>
    <scope>FUNCTION</scope>
    <scope>TRANSPORTER ACTIVITY</scope>
    <scope>BIOPHYSICOCHEMICAL PROPERTIES</scope>
    <scope>SUBUNIT</scope>
    <scope>DOMAIN</scope>
    <scope>MUTAGENESIS OF ASP-238</scope>
</reference>
<reference key="4">
    <citation type="journal article" date="2023" name="Nature">
        <title>Structures of a sperm-specific solute carrier gated by voltage and cAMP.</title>
        <authorList>
            <person name="Kalienkova V."/>
            <person name="Peter M.F."/>
            <person name="Rheinberger J."/>
            <person name="Paulino C."/>
        </authorList>
    </citation>
    <scope>STRUCTURE BY ELECTRON MICROSCOPY (3.21 ANGSTROMS) IN COMPLEX WITH 3',5'-CYCLIC AMP AND 3',5'-CYCLIC GMP</scope>
    <scope>TOPOLOGY</scope>
    <scope>FUNCTION</scope>
    <scope>SUBUNIT</scope>
    <scope>DOMAIN</scope>
</reference>
<gene>
    <name evidence="7" type="primary">SLC9C1</name>
</gene>
<evidence type="ECO:0000255" key="1"/>
<evidence type="ECO:0000255" key="2">
    <source>
        <dbReference type="PROSITE-ProRule" id="PRU00060"/>
    </source>
</evidence>
<evidence type="ECO:0000256" key="3">
    <source>
        <dbReference type="SAM" id="MobiDB-lite"/>
    </source>
</evidence>
<evidence type="ECO:0000269" key="4">
    <source>
    </source>
</evidence>
<evidence type="ECO:0000269" key="5">
    <source>
    </source>
</evidence>
<evidence type="ECO:0000269" key="6">
    <source>
    </source>
</evidence>
<evidence type="ECO:0000303" key="7">
    <source>
    </source>
</evidence>
<evidence type="ECO:0000303" key="8">
    <source>
    </source>
</evidence>
<evidence type="ECO:0000303" key="9">
    <source>
    </source>
</evidence>
<evidence type="ECO:0000305" key="10"/>
<evidence type="ECO:0000305" key="11">
    <source>
    </source>
</evidence>
<evidence type="ECO:0000305" key="12">
    <source>
    </source>
</evidence>
<evidence type="ECO:0000305" key="13">
    <source>
    </source>
</evidence>
<evidence type="ECO:0007744" key="14">
    <source>
        <dbReference type="PDB" id="8PD8"/>
    </source>
</evidence>
<evidence type="ECO:0007744" key="15">
    <source>
        <dbReference type="PDB" id="8PD9"/>
    </source>
</evidence>
<evidence type="ECO:0007744" key="16">
    <source>
        <dbReference type="PDB" id="8PDU"/>
    </source>
</evidence>
<evidence type="ECO:0007744" key="17">
    <source>
        <dbReference type="PDB" id="8PDV"/>
    </source>
</evidence>
<evidence type="ECO:0007829" key="18">
    <source>
        <dbReference type="PDB" id="8OTQ"/>
    </source>
</evidence>
<evidence type="ECO:0007829" key="19">
    <source>
        <dbReference type="PDB" id="8OTX"/>
    </source>
</evidence>
<evidence type="ECO:0007829" key="20">
    <source>
        <dbReference type="PDB" id="8PCZ"/>
    </source>
</evidence>
<evidence type="ECO:0007829" key="21">
    <source>
        <dbReference type="PDB" id="8PD2"/>
    </source>
</evidence>
<evidence type="ECO:0007829" key="22">
    <source>
        <dbReference type="PDB" id="8PDU"/>
    </source>
</evidence>
<evidence type="ECO:0007829" key="23">
    <source>
        <dbReference type="PDB" id="8PDV"/>
    </source>
</evidence>